<sequence>MALVDKHKVKRQRLDRICEGIRPQIMNGPLHPRPLVALLDGRDCTVEMPILKDLATVAFCDAQSTQEIHEKVLNEAVGAMMYHTITLTREDLEKFKALRVIVRIGSGYDNVDIKAAGELGIAVCNIPSAAVEETADSTVCHILNLYRRNTWLYQALREGTRVQSVEQIREVASGAARIRGETLGLIGFGRTGQAVAVRAKAFGFSVIFYDPYLQDGIERSLGVQRVYTLQDLLYQSDCVSLHCNLNEHNHHLINDFTIKQMRQGAFLVNAARGGLVDEKALAQALKEGRIRGAALDVHESEPFSFAQGPLKDAPNLICTPHTAWYSEQASLEMREAAATEIRRAITGRIPESLRNCVNKEFFVTSAPWSVIDQQAIHPELNGATYRYPPGIVGVAPGGLPPAMEGIIPGGIPVTHNLPTVAHPSQAPSPNQPTKHGDNREHPNEQ</sequence>
<proteinExistence type="evidence at protein level"/>
<feature type="chain" id="PRO_0000076045" description="C-terminal-binding protein 2">
    <location>
        <begin position="1"/>
        <end position="445"/>
    </location>
</feature>
<feature type="region of interest" description="Disordered" evidence="3">
    <location>
        <begin position="414"/>
        <end position="445"/>
    </location>
</feature>
<feature type="compositionally biased region" description="Basic and acidic residues" evidence="3">
    <location>
        <begin position="434"/>
        <end position="445"/>
    </location>
</feature>
<feature type="active site" evidence="1">
    <location>
        <position position="272"/>
    </location>
</feature>
<feature type="active site" evidence="1">
    <location>
        <position position="301"/>
    </location>
</feature>
<feature type="active site" description="Proton donor" evidence="1">
    <location>
        <position position="321"/>
    </location>
</feature>
<feature type="binding site" evidence="1">
    <location>
        <position position="106"/>
    </location>
    <ligand>
        <name>NAD(+)</name>
        <dbReference type="ChEBI" id="CHEBI:57540"/>
    </ligand>
</feature>
<feature type="binding site" evidence="1">
    <location>
        <begin position="186"/>
        <end position="191"/>
    </location>
    <ligand>
        <name>NAD(+)</name>
        <dbReference type="ChEBI" id="CHEBI:57540"/>
    </ligand>
</feature>
<feature type="binding site" evidence="1">
    <location>
        <position position="210"/>
    </location>
    <ligand>
        <name>NAD(+)</name>
        <dbReference type="ChEBI" id="CHEBI:57540"/>
    </ligand>
</feature>
<feature type="binding site" evidence="1">
    <location>
        <begin position="243"/>
        <end position="249"/>
    </location>
    <ligand>
        <name>NAD(+)</name>
        <dbReference type="ChEBI" id="CHEBI:57540"/>
    </ligand>
</feature>
<feature type="binding site" evidence="1">
    <location>
        <begin position="270"/>
        <end position="272"/>
    </location>
    <ligand>
        <name>NAD(+)</name>
        <dbReference type="ChEBI" id="CHEBI:57540"/>
    </ligand>
</feature>
<feature type="binding site" evidence="1">
    <location>
        <position position="296"/>
    </location>
    <ligand>
        <name>NAD(+)</name>
        <dbReference type="ChEBI" id="CHEBI:57540"/>
    </ligand>
</feature>
<feature type="binding site" evidence="1">
    <location>
        <begin position="321"/>
        <end position="324"/>
    </location>
    <ligand>
        <name>NAD(+)</name>
        <dbReference type="ChEBI" id="CHEBI:57540"/>
    </ligand>
</feature>
<feature type="modified residue" description="Asymmetric dimethylarginine" evidence="9">
    <location>
        <position position="22"/>
    </location>
</feature>
<feature type="modified residue" description="Phosphoserine; by HIPK2" evidence="2">
    <location>
        <position position="428"/>
    </location>
</feature>
<feature type="splice variant" id="VSP_027616" description="In isoform 2." evidence="8">
    <original>MALVDKHKVKRQRLDRICEG</original>
    <variation>MPVPSRHINIGRSQSWDAAGWYEGPWENAGPPGRRSSLTYGPGEGTWCELLNHRAQDTESYLSREAFYNSLASRKGSVPDFTFYDSRQAVMSGRGSVLPQDYYGDPSRGTRVPKEPPFYRDPGTSRPVPSYGMLGSRMPWEQVQGQLPALQDTGHLYPESGGKTVPHGQRTHGRAPSPGRYGREQPDTRLGIEVPTYSPNSSQVYNDICERPVDSTPARQVAPTCLVVDPSSAVPTENSTGVAPGSLNRGYGPTRESIHSKLAYENYEADLSTFQGPGGKRTMYPEFLALLRAEGVAEATLAALLQQGFDSPAVLATLEDADIKSVAPNLGQARVLSRLASSCRTEMQFRRQDRTGPLPRNRSSSFSHRSELLPNDMASLGTTALQFHPAGPLQTPSPRAGDLGRRPSSAPSQHLLETAATYSTPVVGSQTPHLPSNSGYSSPTPCALTARLASSYPSQAGVALTANPGPSAPLHSNPRTAYSTSYTVPMELLKRERSMTASPLPSPHGSPQLLRKPGAAPVEPSTLPPVSQSLHTPHSPYQKVARRTGAPIIVSTMLTPEPS</variation>
    <location>
        <begin position="1"/>
        <end position="20"/>
    </location>
</feature>
<feature type="sequence conflict" description="In Ref. 1; AAC40043." evidence="8" ref="1">
    <original>P</original>
    <variation>H</variation>
    <location>
        <position position="49"/>
    </location>
</feature>
<feature type="sequence conflict" description="In Ref. 1; AAC40043." evidence="8" ref="1">
    <original>E</original>
    <variation>D</variation>
    <location>
        <position position="170"/>
    </location>
</feature>
<feature type="sequence conflict" description="In Ref. 1; AAC40043." evidence="8" ref="1">
    <original>G</original>
    <variation>A</variation>
    <location>
        <position position="288"/>
    </location>
</feature>
<reference key="1">
    <citation type="journal article" date="1998" name="Genomics">
        <title>A novel C-terminal binding protein (CTBP2) is closely related to CTBP1, an adenovirus E1A-binding protein, and maps to human chromosome 21q21.3.</title>
        <authorList>
            <person name="Katsanis N."/>
            <person name="Fisher E.M.C."/>
        </authorList>
    </citation>
    <scope>NUCLEOTIDE SEQUENCE [MRNA] (ISOFORM 1)</scope>
</reference>
<reference key="2">
    <citation type="journal article" date="1998" name="EMBO J.">
        <title>Cloning and characterization of mCtBP2, a co-repressor that associates with basic krueppel-like factor and other mammalian transcriptional regulators.</title>
        <authorList>
            <person name="Turner J."/>
            <person name="Crossley M."/>
        </authorList>
    </citation>
    <scope>NUCLEOTIDE SEQUENCE [MRNA] (ISOFORM 1)</scope>
</reference>
<reference key="3">
    <citation type="journal article" date="1999" name="Mol. Cell. Biol.">
        <title>Identification of CtBP1 and CtBP2 as corepressors of zinc finger-homeodomain factor deltaEF1.</title>
        <authorList>
            <person name="Furusawa T."/>
            <person name="Moribe H."/>
            <person name="Kondoh H."/>
            <person name="Higashi Y."/>
        </authorList>
    </citation>
    <scope>NUCLEOTIDE SEQUENCE [MRNA] (ISOFORM 1)</scope>
    <source>
        <strain>ICR</strain>
    </source>
</reference>
<reference key="4">
    <citation type="journal article" date="2009" name="PLoS Biol.">
        <title>Lineage-specific biology revealed by a finished genome assembly of the mouse.</title>
        <authorList>
            <person name="Church D.M."/>
            <person name="Goodstadt L."/>
            <person name="Hillier L.W."/>
            <person name="Zody M.C."/>
            <person name="Goldstein S."/>
            <person name="She X."/>
            <person name="Bult C.J."/>
            <person name="Agarwala R."/>
            <person name="Cherry J.L."/>
            <person name="DiCuccio M."/>
            <person name="Hlavina W."/>
            <person name="Kapustin Y."/>
            <person name="Meric P."/>
            <person name="Maglott D."/>
            <person name="Birtle Z."/>
            <person name="Marques A.C."/>
            <person name="Graves T."/>
            <person name="Zhou S."/>
            <person name="Teague B."/>
            <person name="Potamousis K."/>
            <person name="Churas C."/>
            <person name="Place M."/>
            <person name="Herschleb J."/>
            <person name="Runnheim R."/>
            <person name="Forrest D."/>
            <person name="Amos-Landgraf J."/>
            <person name="Schwartz D.C."/>
            <person name="Cheng Z."/>
            <person name="Lindblad-Toh K."/>
            <person name="Eichler E.E."/>
            <person name="Ponting C.P."/>
        </authorList>
    </citation>
    <scope>NUCLEOTIDE SEQUENCE [LARGE SCALE GENOMIC DNA]</scope>
    <scope>ALTERNATIVE SPLICING (ISOFORM 2)</scope>
    <source>
        <strain>C57BL/6J</strain>
    </source>
</reference>
<reference key="5">
    <citation type="journal article" date="2004" name="J. Biol. Chem.">
        <title>Characterization of four autonomous repression domains in the corepressor receptor interacting protein 140.</title>
        <authorList>
            <person name="Christian M."/>
            <person name="Tullet J.M.A."/>
            <person name="Parker M.G."/>
        </authorList>
    </citation>
    <scope>INTERACTION WITH NRIP1</scope>
</reference>
<reference key="6">
    <citation type="journal article" date="2006" name="J. Biol. Chem.">
        <title>Zinc finger protein Wiz links G9a/GLP histone methyltransferases to the co-repressor molecule CtBP.</title>
        <authorList>
            <person name="Ueda J."/>
            <person name="Tachibana M."/>
            <person name="Ikura T."/>
            <person name="Shinkai Y."/>
        </authorList>
    </citation>
    <scope>INTERACTION WITH WIZ</scope>
</reference>
<reference key="7">
    <citation type="journal article" date="2006" name="Mol. Cell. Biol.">
        <title>Specific recognition of ZNF217 and other zinc finger proteins at a surface groove of C-terminal binding proteins.</title>
        <authorList>
            <person name="Quinlan K.G.R."/>
            <person name="Nardini M."/>
            <person name="Verger A."/>
            <person name="Francescato P."/>
            <person name="Yaswen P."/>
            <person name="Corda D."/>
            <person name="Bolognesi M."/>
            <person name="Crossley M."/>
        </authorList>
    </citation>
    <scope>INTERACTION WITH ZNF217</scope>
</reference>
<reference key="8">
    <citation type="journal article" date="2008" name="Genes Dev.">
        <title>Regulation of the brown and white fat gene programs through a PRDM16/CtBP transcriptional complex.</title>
        <authorList>
            <person name="Kajimura S."/>
            <person name="Seale P."/>
            <person name="Tomaru T."/>
            <person name="Erdjument-Bromage H."/>
            <person name="Cooper M.P."/>
            <person name="Ruas J.L."/>
            <person name="Chin S."/>
            <person name="Tempst P."/>
            <person name="Lazar M.A."/>
            <person name="Spiegelman B.M."/>
        </authorList>
    </citation>
    <scope>FUNCTION</scope>
    <scope>INTERACTION WITH PRDM16</scope>
    <scope>SUBCELLULAR LOCATION</scope>
</reference>
<reference key="9">
    <citation type="journal article" date="2010" name="Cell">
        <title>A tissue-specific atlas of mouse protein phosphorylation and expression.</title>
        <authorList>
            <person name="Huttlin E.L."/>
            <person name="Jedrychowski M.P."/>
            <person name="Elias J.E."/>
            <person name="Goswami T."/>
            <person name="Rad R."/>
            <person name="Beausoleil S.A."/>
            <person name="Villen J."/>
            <person name="Haas W."/>
            <person name="Sowa M.E."/>
            <person name="Gygi S.P."/>
        </authorList>
    </citation>
    <scope>IDENTIFICATION BY MASS SPECTROMETRY [LARGE SCALE ANALYSIS]</scope>
    <source>
        <tissue>Kidney</tissue>
        <tissue>Lung</tissue>
        <tissue>Testis</tissue>
    </source>
</reference>
<reference key="10">
    <citation type="journal article" date="2014" name="Mol. Cell. Proteomics">
        <title>Immunoaffinity enrichment and mass spectrometry analysis of protein methylation.</title>
        <authorList>
            <person name="Guo A."/>
            <person name="Gu H."/>
            <person name="Zhou J."/>
            <person name="Mulhern D."/>
            <person name="Wang Y."/>
            <person name="Lee K.A."/>
            <person name="Yang V."/>
            <person name="Aguiar M."/>
            <person name="Kornhauser J."/>
            <person name="Jia X."/>
            <person name="Ren J."/>
            <person name="Beausoleil S.A."/>
            <person name="Silva J.C."/>
            <person name="Vemulapalli V."/>
            <person name="Bedford M.T."/>
            <person name="Comb M.J."/>
        </authorList>
    </citation>
    <scope>METHYLATION [LARGE SCALE ANALYSIS] AT ARG-22</scope>
    <scope>IDENTIFICATION BY MASS SPECTROMETRY [LARGE SCALE ANALYSIS]</scope>
    <source>
        <tissue>Brain</tissue>
        <tissue>Embryo</tissue>
    </source>
</reference>
<organism>
    <name type="scientific">Mus musculus</name>
    <name type="common">Mouse</name>
    <dbReference type="NCBI Taxonomy" id="10090"/>
    <lineage>
        <taxon>Eukaryota</taxon>
        <taxon>Metazoa</taxon>
        <taxon>Chordata</taxon>
        <taxon>Craniata</taxon>
        <taxon>Vertebrata</taxon>
        <taxon>Euteleostomi</taxon>
        <taxon>Mammalia</taxon>
        <taxon>Eutheria</taxon>
        <taxon>Euarchontoglires</taxon>
        <taxon>Glires</taxon>
        <taxon>Rodentia</taxon>
        <taxon>Myomorpha</taxon>
        <taxon>Muroidea</taxon>
        <taxon>Muridae</taxon>
        <taxon>Murinae</taxon>
        <taxon>Mus</taxon>
        <taxon>Mus</taxon>
    </lineage>
</organism>
<comment type="function">
    <text evidence="1 7">Corepressor targeting diverse transcription regulators. Isoform 2 probably acts as a scaffold for specialized synapses (By similarity). Functions in brown adipose tissue (BAT) differentiation.</text>
</comment>
<comment type="subunit">
    <text evidence="1 2 4 5 6 7">Interacts with HIPK2 and PNN (By similarity). Interacts with the transcription factors ZNF217, BKLF, delta EF1/AREB6/ZEB, EVI-1 and Friend of GATA (FOG) via the consensus motif P-X-[DNS]-L-[STVA]. Also interacts with the C-terminus of adenovirus E1A protein. Can form a complex with BKLF on a CACCC-box oligonucleotide. Can form homodimers or heterodimers of CTBP1 and CTBP2. Interacts with NRIP1 and WIZ. Interacts with PRDM16; represses white adipose tissue (WAT)-specific genes expression. Interacts with MCRIP1 (By similarity).</text>
</comment>
<comment type="interaction">
    <interactant intactId="EBI-1384883">
        <id>P56546</id>
    </interactant>
    <interactant intactId="EBI-2507362">
        <id>Q14526</id>
        <label>HIC1</label>
    </interactant>
    <organismsDiffer>true</organismsDiffer>
    <experiments>2</experiments>
</comment>
<comment type="interaction">
    <interactant intactId="EBI-1384883">
        <id>P56546</id>
    </interactant>
    <interactant intactId="EBI-1384862">
        <id>Q03112</id>
        <label>MECOM</label>
    </interactant>
    <organismsDiffer>true</organismsDiffer>
    <experiments>3</experiments>
</comment>
<comment type="interaction">
    <interactant intactId="EBI-1384883">
        <id>P56546</id>
    </interactant>
    <interactant intactId="EBI-5282871">
        <id>Q9HAZ2-2</id>
        <label>PRDM16</label>
    </interactant>
    <organismsDiffer>true</organismsDiffer>
    <experiments>2</experiments>
</comment>
<comment type="interaction">
    <interactant intactId="EBI-1384883">
        <id>P56546</id>
    </interactant>
    <interactant intactId="EBI-4566658">
        <id>Q9HAZ2-4</id>
        <label>PRDM16</label>
    </interactant>
    <organismsDiffer>true</organismsDiffer>
    <experiments>2</experiments>
</comment>
<comment type="subcellular location">
    <subcellularLocation>
        <location evidence="8">Nucleus</location>
    </subcellularLocation>
    <subcellularLocation>
        <location evidence="1">Synapse</location>
    </subcellularLocation>
</comment>
<comment type="alternative products">
    <event type="alternative splicing"/>
    <isoform>
        <id>P56546-1</id>
        <name>1</name>
        <sequence type="displayed"/>
    </isoform>
    <isoform>
        <id>P56546-2</id>
        <name>2</name>
        <name>Ribeye</name>
        <sequence type="described" ref="VSP_027616"/>
    </isoform>
</comment>
<comment type="tissue specificity">
    <text>Found in all tissues except spleen and liver.</text>
</comment>
<comment type="developmental stage">
    <text>Strong expression confined to the embryonic stages.</text>
</comment>
<comment type="PTM">
    <text evidence="1">Phosphorylation by HIPK2 on Ser-428 induces proteasomal degradation.</text>
</comment>
<comment type="similarity">
    <text evidence="8">Belongs to the D-isomer specific 2-hydroxyacid dehydrogenase family.</text>
</comment>
<comment type="sequence caution" evidence="8">
    <conflict type="frameshift">
        <sequence resource="EMBL-CDS" id="AAC40043"/>
    </conflict>
</comment>
<name>CTBP2_MOUSE</name>
<accession>P56546</accession>
<accession>O54855</accession>
<accession>O88462</accession>
<gene>
    <name type="primary">Ctbp2</name>
</gene>
<keyword id="KW-0025">Alternative splicing</keyword>
<keyword id="KW-0221">Differentiation</keyword>
<keyword id="KW-0488">Methylation</keyword>
<keyword id="KW-0520">NAD</keyword>
<keyword id="KW-0539">Nucleus</keyword>
<keyword id="KW-0560">Oxidoreductase</keyword>
<keyword id="KW-0597">Phosphoprotein</keyword>
<keyword id="KW-1185">Reference proteome</keyword>
<keyword id="KW-0678">Repressor</keyword>
<keyword id="KW-0770">Synapse</keyword>
<keyword id="KW-0804">Transcription</keyword>
<keyword id="KW-0805">Transcription regulation</keyword>
<evidence type="ECO:0000250" key="1"/>
<evidence type="ECO:0000250" key="2">
    <source>
        <dbReference type="UniProtKB" id="P56545"/>
    </source>
</evidence>
<evidence type="ECO:0000256" key="3">
    <source>
        <dbReference type="SAM" id="MobiDB-lite"/>
    </source>
</evidence>
<evidence type="ECO:0000269" key="4">
    <source>
    </source>
</evidence>
<evidence type="ECO:0000269" key="5">
    <source>
    </source>
</evidence>
<evidence type="ECO:0000269" key="6">
    <source>
    </source>
</evidence>
<evidence type="ECO:0000269" key="7">
    <source>
    </source>
</evidence>
<evidence type="ECO:0000305" key="8"/>
<evidence type="ECO:0007744" key="9">
    <source>
    </source>
</evidence>
<dbReference type="EMBL" id="AF016508">
    <property type="protein sequence ID" value="AAC40043.1"/>
    <property type="status" value="ALT_FRAME"/>
    <property type="molecule type" value="mRNA"/>
</dbReference>
<dbReference type="EMBL" id="AF059735">
    <property type="protein sequence ID" value="AAC33873.1"/>
    <property type="molecule type" value="mRNA"/>
</dbReference>
<dbReference type="EMBL" id="AB033123">
    <property type="protein sequence ID" value="BAA85181.1"/>
    <property type="molecule type" value="mRNA"/>
</dbReference>
<dbReference type="EMBL" id="AC119806">
    <property type="status" value="NOT_ANNOTATED_CDS"/>
    <property type="molecule type" value="Genomic_DNA"/>
</dbReference>
<dbReference type="CCDS" id="CCDS21930.1">
    <molecule id="P56546-1"/>
</dbReference>
<dbReference type="CCDS" id="CCDS52417.1">
    <molecule id="P56546-2"/>
</dbReference>
<dbReference type="RefSeq" id="NP_001164215.1">
    <molecule id="P56546-2"/>
    <property type="nucleotide sequence ID" value="NM_001170744.2"/>
</dbReference>
<dbReference type="RefSeq" id="NP_001399224.1">
    <molecule id="P56546-1"/>
    <property type="nucleotide sequence ID" value="NM_001412295.1"/>
</dbReference>
<dbReference type="RefSeq" id="NP_001399225.1">
    <molecule id="P56546-1"/>
    <property type="nucleotide sequence ID" value="NM_001412296.1"/>
</dbReference>
<dbReference type="RefSeq" id="NP_001399226.1">
    <molecule id="P56546-1"/>
    <property type="nucleotide sequence ID" value="NM_001412297.1"/>
</dbReference>
<dbReference type="RefSeq" id="NP_001399227.1">
    <molecule id="P56546-1"/>
    <property type="nucleotide sequence ID" value="NM_001412298.1"/>
</dbReference>
<dbReference type="RefSeq" id="NP_001399228.1">
    <molecule id="P56546-1"/>
    <property type="nucleotide sequence ID" value="NM_001412299.1"/>
</dbReference>
<dbReference type="RefSeq" id="NP_001399229.1">
    <molecule id="P56546-1"/>
    <property type="nucleotide sequence ID" value="NM_001412300.1"/>
</dbReference>
<dbReference type="RefSeq" id="NP_001399230.1">
    <molecule id="P56546-1"/>
    <property type="nucleotide sequence ID" value="NM_001412301.1"/>
</dbReference>
<dbReference type="RefSeq" id="NP_001399231.1">
    <molecule id="P56546-1"/>
    <property type="nucleotide sequence ID" value="NM_001412302.1"/>
</dbReference>
<dbReference type="RefSeq" id="NP_034110.1">
    <molecule id="P56546-1"/>
    <property type="nucleotide sequence ID" value="NM_009980.5"/>
</dbReference>
<dbReference type="RefSeq" id="XP_006507371.1">
    <property type="nucleotide sequence ID" value="XM_006507308.3"/>
</dbReference>
<dbReference type="RefSeq" id="XP_006507372.1">
    <property type="nucleotide sequence ID" value="XM_006507309.3"/>
</dbReference>
<dbReference type="RefSeq" id="XP_006507373.1">
    <property type="nucleotide sequence ID" value="XM_006507310.3"/>
</dbReference>
<dbReference type="RefSeq" id="XP_006507374.1">
    <property type="nucleotide sequence ID" value="XM_006507311.3"/>
</dbReference>
<dbReference type="RefSeq" id="XP_006507375.1">
    <property type="nucleotide sequence ID" value="XM_006507312.3"/>
</dbReference>
<dbReference type="SMR" id="P56546"/>
<dbReference type="BioGRID" id="198962">
    <property type="interactions" value="27"/>
</dbReference>
<dbReference type="FunCoup" id="P56546">
    <property type="interactions" value="1253"/>
</dbReference>
<dbReference type="IntAct" id="P56546">
    <property type="interactions" value="9"/>
</dbReference>
<dbReference type="STRING" id="10090.ENSMUSP00000130294"/>
<dbReference type="GlyGen" id="P56546">
    <property type="glycosylation" value="1 site, 1 O-linked glycan (1 site)"/>
</dbReference>
<dbReference type="iPTMnet" id="P56546"/>
<dbReference type="PhosphoSitePlus" id="P56546"/>
<dbReference type="SwissPalm" id="P56546"/>
<dbReference type="REPRODUCTION-2DPAGE" id="P56546"/>
<dbReference type="PaxDb" id="10090-ENSMUSP00000130294"/>
<dbReference type="PeptideAtlas" id="P56546"/>
<dbReference type="ProteomicsDB" id="285386">
    <molecule id="P56546-1"/>
</dbReference>
<dbReference type="ProteomicsDB" id="285387">
    <molecule id="P56546-2"/>
</dbReference>
<dbReference type="Pumba" id="P56546"/>
<dbReference type="Antibodypedia" id="19137">
    <property type="antibodies" value="407 antibodies from 38 providers"/>
</dbReference>
<dbReference type="DNASU" id="13017"/>
<dbReference type="Ensembl" id="ENSMUST00000033269.15">
    <molecule id="P56546-1"/>
    <property type="protein sequence ID" value="ENSMUSP00000033269.9"/>
    <property type="gene ID" value="ENSMUSG00000030970.17"/>
</dbReference>
<dbReference type="Ensembl" id="ENSMUST00000169570.8">
    <molecule id="P56546-2"/>
    <property type="protein sequence ID" value="ENSMUSP00000130294.2"/>
    <property type="gene ID" value="ENSMUSG00000030970.17"/>
</dbReference>
<dbReference type="GeneID" id="13017"/>
<dbReference type="KEGG" id="mmu:13017"/>
<dbReference type="UCSC" id="uc009kcy.1">
    <molecule id="P56546-1"/>
    <property type="organism name" value="mouse"/>
</dbReference>
<dbReference type="UCSC" id="uc012fve.1">
    <molecule id="P56546-2"/>
    <property type="organism name" value="mouse"/>
</dbReference>
<dbReference type="AGR" id="MGI:1201686"/>
<dbReference type="CTD" id="1488"/>
<dbReference type="MGI" id="MGI:1201686">
    <property type="gene designation" value="Ctbp2"/>
</dbReference>
<dbReference type="VEuPathDB" id="HostDB:ENSMUSG00000030970"/>
<dbReference type="eggNOG" id="KOG0067">
    <property type="taxonomic scope" value="Eukaryota"/>
</dbReference>
<dbReference type="GeneTree" id="ENSGT00940000154430"/>
<dbReference type="HOGENOM" id="CLU_012460_0_0_1"/>
<dbReference type="InParanoid" id="P56546"/>
<dbReference type="OMA" id="NHHSQKP"/>
<dbReference type="OrthoDB" id="30734at9989"/>
<dbReference type="PhylomeDB" id="P56546"/>
<dbReference type="TreeFam" id="TF313593"/>
<dbReference type="Reactome" id="R-MMU-4641265">
    <property type="pathway name" value="Repression of WNT target genes"/>
</dbReference>
<dbReference type="BioGRID-ORCS" id="13017">
    <property type="hits" value="3 hits in 77 CRISPR screens"/>
</dbReference>
<dbReference type="ChiTaRS" id="Ctbp2">
    <property type="organism name" value="mouse"/>
</dbReference>
<dbReference type="PRO" id="PR:P56546"/>
<dbReference type="Proteomes" id="UP000000589">
    <property type="component" value="Chromosome 7"/>
</dbReference>
<dbReference type="RNAct" id="P56546">
    <property type="molecule type" value="protein"/>
</dbReference>
<dbReference type="Bgee" id="ENSMUSG00000030970">
    <property type="expression patterns" value="Expressed in saccule of membranous labyrinth and 275 other cell types or tissues"/>
</dbReference>
<dbReference type="ExpressionAtlas" id="P56546">
    <property type="expression patterns" value="baseline and differential"/>
</dbReference>
<dbReference type="GO" id="GO:0005829">
    <property type="term" value="C:cytosol"/>
    <property type="evidence" value="ECO:0000304"/>
    <property type="project" value="Reactome"/>
</dbReference>
<dbReference type="GO" id="GO:0098982">
    <property type="term" value="C:GABA-ergic synapse"/>
    <property type="evidence" value="ECO:0000314"/>
    <property type="project" value="SynGO"/>
</dbReference>
<dbReference type="GO" id="GO:0098978">
    <property type="term" value="C:glutamatergic synapse"/>
    <property type="evidence" value="ECO:0000314"/>
    <property type="project" value="SynGO"/>
</dbReference>
<dbReference type="GO" id="GO:0005634">
    <property type="term" value="C:nucleus"/>
    <property type="evidence" value="ECO:0000314"/>
    <property type="project" value="UniProtKB"/>
</dbReference>
<dbReference type="GO" id="GO:0098684">
    <property type="term" value="C:photoreceptor ribbon synapse"/>
    <property type="evidence" value="ECO:0000314"/>
    <property type="project" value="SynGO"/>
</dbReference>
<dbReference type="GO" id="GO:0098831">
    <property type="term" value="C:presynaptic active zone cytoplasmic component"/>
    <property type="evidence" value="ECO:0000314"/>
    <property type="project" value="SynGO"/>
</dbReference>
<dbReference type="GO" id="GO:0099523">
    <property type="term" value="C:presynaptic cytosol"/>
    <property type="evidence" value="ECO:0000314"/>
    <property type="project" value="SynGO"/>
</dbReference>
<dbReference type="GO" id="GO:0097470">
    <property type="term" value="C:ribbon synapse"/>
    <property type="evidence" value="ECO:0000314"/>
    <property type="project" value="MGI"/>
</dbReference>
<dbReference type="GO" id="GO:0045202">
    <property type="term" value="C:synapse"/>
    <property type="evidence" value="ECO:0000314"/>
    <property type="project" value="MGI"/>
</dbReference>
<dbReference type="GO" id="GO:0017053">
    <property type="term" value="C:transcription repressor complex"/>
    <property type="evidence" value="ECO:0000314"/>
    <property type="project" value="UniProtKB"/>
</dbReference>
<dbReference type="GO" id="GO:0003682">
    <property type="term" value="F:chromatin binding"/>
    <property type="evidence" value="ECO:0000314"/>
    <property type="project" value="MGI"/>
</dbReference>
<dbReference type="GO" id="GO:0051287">
    <property type="term" value="F:NAD binding"/>
    <property type="evidence" value="ECO:0007669"/>
    <property type="project" value="InterPro"/>
</dbReference>
<dbReference type="GO" id="GO:0042974">
    <property type="term" value="F:nuclear retinoic acid receptor binding"/>
    <property type="evidence" value="ECO:0000353"/>
    <property type="project" value="MGI"/>
</dbReference>
<dbReference type="GO" id="GO:0016616">
    <property type="term" value="F:oxidoreductase activity, acting on the CH-OH group of donors, NAD or NADP as acceptor"/>
    <property type="evidence" value="ECO:0007669"/>
    <property type="project" value="InterPro"/>
</dbReference>
<dbReference type="GO" id="GO:0098882">
    <property type="term" value="F:structural constituent of presynaptic active zone"/>
    <property type="evidence" value="ECO:0000314"/>
    <property type="project" value="SynGO"/>
</dbReference>
<dbReference type="GO" id="GO:0003713">
    <property type="term" value="F:transcription coactivator activity"/>
    <property type="evidence" value="ECO:0000316"/>
    <property type="project" value="MGI"/>
</dbReference>
<dbReference type="GO" id="GO:0001221">
    <property type="term" value="F:transcription coregulator binding"/>
    <property type="evidence" value="ECO:0000353"/>
    <property type="project" value="BHF-UCL"/>
</dbReference>
<dbReference type="GO" id="GO:0003714">
    <property type="term" value="F:transcription corepressor activity"/>
    <property type="evidence" value="ECO:0000314"/>
    <property type="project" value="MGI"/>
</dbReference>
<dbReference type="GO" id="GO:1990830">
    <property type="term" value="P:cellular response to leukemia inhibitory factor"/>
    <property type="evidence" value="ECO:0000270"/>
    <property type="project" value="MGI"/>
</dbReference>
<dbReference type="GO" id="GO:0045892">
    <property type="term" value="P:negative regulation of DNA-templated transcription"/>
    <property type="evidence" value="ECO:0000314"/>
    <property type="project" value="UniProtKB"/>
</dbReference>
<dbReference type="GO" id="GO:0048386">
    <property type="term" value="P:positive regulation of retinoic acid receptor signaling pathway"/>
    <property type="evidence" value="ECO:0000315"/>
    <property type="project" value="MGI"/>
</dbReference>
<dbReference type="GO" id="GO:0045944">
    <property type="term" value="P:positive regulation of transcription by RNA polymerase II"/>
    <property type="evidence" value="ECO:0000315"/>
    <property type="project" value="MGI"/>
</dbReference>
<dbReference type="GO" id="GO:0016081">
    <property type="term" value="P:synaptic vesicle docking"/>
    <property type="evidence" value="ECO:0000314"/>
    <property type="project" value="SynGO"/>
</dbReference>
<dbReference type="GO" id="GO:0050872">
    <property type="term" value="P:white fat cell differentiation"/>
    <property type="evidence" value="ECO:0000314"/>
    <property type="project" value="UniProtKB"/>
</dbReference>
<dbReference type="CDD" id="cd05299">
    <property type="entry name" value="CtBP_dh"/>
    <property type="match status" value="1"/>
</dbReference>
<dbReference type="FunFam" id="3.40.50.720:FF:001383">
    <property type="entry name" value="C-terminal-binding protein 2"/>
    <property type="match status" value="1"/>
</dbReference>
<dbReference type="Gene3D" id="3.40.50.720">
    <property type="entry name" value="NAD(P)-binding Rossmann-like Domain"/>
    <property type="match status" value="2"/>
</dbReference>
<dbReference type="InterPro" id="IPR043322">
    <property type="entry name" value="CtBP"/>
</dbReference>
<dbReference type="InterPro" id="IPR051638">
    <property type="entry name" value="CTBP_dehydrogenase"/>
</dbReference>
<dbReference type="InterPro" id="IPR006139">
    <property type="entry name" value="D-isomer_2_OHA_DH_cat_dom"/>
</dbReference>
<dbReference type="InterPro" id="IPR029753">
    <property type="entry name" value="D-isomer_DH_CS"/>
</dbReference>
<dbReference type="InterPro" id="IPR006140">
    <property type="entry name" value="D-isomer_DH_NAD-bd"/>
</dbReference>
<dbReference type="InterPro" id="IPR036291">
    <property type="entry name" value="NAD(P)-bd_dom_sf"/>
</dbReference>
<dbReference type="PANTHER" id="PTHR46029">
    <property type="entry name" value="C-TERMINAL-BINDING PROTEIN"/>
    <property type="match status" value="1"/>
</dbReference>
<dbReference type="PANTHER" id="PTHR46029:SF3">
    <property type="entry name" value="C-TERMINAL-BINDING PROTEIN 2"/>
    <property type="match status" value="1"/>
</dbReference>
<dbReference type="Pfam" id="PF00389">
    <property type="entry name" value="2-Hacid_dh"/>
    <property type="match status" value="1"/>
</dbReference>
<dbReference type="Pfam" id="PF02826">
    <property type="entry name" value="2-Hacid_dh_C"/>
    <property type="match status" value="1"/>
</dbReference>
<dbReference type="SUPFAM" id="SSF52283">
    <property type="entry name" value="Formate/glycerate dehydrogenase catalytic domain-like"/>
    <property type="match status" value="1"/>
</dbReference>
<dbReference type="SUPFAM" id="SSF51735">
    <property type="entry name" value="NAD(P)-binding Rossmann-fold domains"/>
    <property type="match status" value="1"/>
</dbReference>
<dbReference type="PROSITE" id="PS00671">
    <property type="entry name" value="D_2_HYDROXYACID_DH_3"/>
    <property type="match status" value="1"/>
</dbReference>
<protein>
    <recommendedName>
        <fullName>C-terminal-binding protein 2</fullName>
        <shortName>CtBP2</shortName>
    </recommendedName>
</protein>